<proteinExistence type="inferred from homology"/>
<organism>
    <name type="scientific">African swine fever virus (isolate Warthog/Namibia/Wart80/1980)</name>
    <name type="common">ASFV</name>
    <dbReference type="NCBI Taxonomy" id="561444"/>
    <lineage>
        <taxon>Viruses</taxon>
        <taxon>Varidnaviria</taxon>
        <taxon>Bamfordvirae</taxon>
        <taxon>Nucleocytoviricota</taxon>
        <taxon>Pokkesviricetes</taxon>
        <taxon>Asfuvirales</taxon>
        <taxon>Asfarviridae</taxon>
        <taxon>Asfivirus</taxon>
        <taxon>African swine fever virus</taxon>
    </lineage>
</organism>
<reference key="1">
    <citation type="submission" date="2003-03" db="EMBL/GenBank/DDBJ databases">
        <title>African swine fever virus genomes.</title>
        <authorList>
            <person name="Kutish G.F."/>
            <person name="Rock D.L."/>
        </authorList>
    </citation>
    <scope>NUCLEOTIDE SEQUENCE [LARGE SCALE GENOMIC DNA]</scope>
</reference>
<accession>P0CA47</accession>
<name>VF137_ASFWA</name>
<comment type="function">
    <text evidence="1">Plays a role in the inhibition of the host innate immune response. Mechanistically, promotes the autophagy-mediated lysosomal degradation of host TBK1 and affects IRF3 nuclear translocation to block type I IFN production.</text>
</comment>
<comment type="subunit">
    <text evidence="1">Interacts with host TBK1.</text>
</comment>
<comment type="subcellular location">
    <subcellularLocation>
        <location evidence="1">Virion</location>
    </subcellularLocation>
    <subcellularLocation>
        <location evidence="1">Host cytoplasm</location>
    </subcellularLocation>
</comment>
<comment type="induction">
    <text evidence="2">Expressed in the late phase of the viral replicative cycle.</text>
</comment>
<comment type="similarity">
    <text evidence="2">Belongs to the asfivirus A137R family.</text>
</comment>
<gene>
    <name type="ordered locus">War-052</name>
</gene>
<sequence>MEAVLTKLDQEEKRALQDFHRCAWEETKNIINDFLEIPEERCTYKFNPYTKKMELLFTPEFHTAWQEVPECREFILNFLRLISGHRVVLKGPIIVFTKEVKNLGIPSTINVDFQANIENMDDLQKGNLIGKMNIKES</sequence>
<organismHost>
    <name type="scientific">Ornithodoros</name>
    <name type="common">relapsing fever ticks</name>
    <dbReference type="NCBI Taxonomy" id="6937"/>
</organismHost>
<organismHost>
    <name type="scientific">Phacochoerus aethiopicus</name>
    <name type="common">Warthog</name>
    <dbReference type="NCBI Taxonomy" id="85517"/>
</organismHost>
<organismHost>
    <name type="scientific">Phacochoerus africanus</name>
    <name type="common">Warthog</name>
    <dbReference type="NCBI Taxonomy" id="41426"/>
</organismHost>
<organismHost>
    <name type="scientific">Potamochoerus larvatus</name>
    <name type="common">Bushpig</name>
    <dbReference type="NCBI Taxonomy" id="273792"/>
</organismHost>
<organismHost>
    <name type="scientific">Sus scrofa</name>
    <name type="common">Pig</name>
    <dbReference type="NCBI Taxonomy" id="9823"/>
</organismHost>
<evidence type="ECO:0000250" key="1">
    <source>
        <dbReference type="UniProtKB" id="Q07344"/>
    </source>
</evidence>
<evidence type="ECO:0000305" key="2"/>
<protein>
    <recommendedName>
        <fullName>Structural protein A137R</fullName>
    </recommendedName>
</protein>
<dbReference type="EMBL" id="AY261366">
    <property type="status" value="NOT_ANNOTATED_CDS"/>
    <property type="molecule type" value="Genomic_DNA"/>
</dbReference>
<dbReference type="SMR" id="P0CA47"/>
<dbReference type="Proteomes" id="UP000000858">
    <property type="component" value="Segment"/>
</dbReference>
<dbReference type="GO" id="GO:0030430">
    <property type="term" value="C:host cell cytoplasm"/>
    <property type="evidence" value="ECO:0007669"/>
    <property type="project" value="UniProtKB-SubCell"/>
</dbReference>
<dbReference type="GO" id="GO:0044423">
    <property type="term" value="C:virion component"/>
    <property type="evidence" value="ECO:0007669"/>
    <property type="project" value="UniProtKB-KW"/>
</dbReference>
<feature type="chain" id="PRO_0000373518" description="Structural protein A137R">
    <location>
        <begin position="1"/>
        <end position="137"/>
    </location>
</feature>
<keyword id="KW-1035">Host cytoplasm</keyword>
<keyword id="KW-0426">Late protein</keyword>
<keyword id="KW-0946">Virion</keyword>